<sequence>MKLLGHRKSHGHQRADASPDAGSKDGCRPDSGRTSGSDTSRGSQTTGPKGRPTPKRNQSRRHTKKGPVAPAPMTAAQARARRKSLAGPKLSREERRAEKAANRARMTERRERMMAGEEAYLLPRDRGPVRRYVRDVVDSRRNLLGLFMPSALTLLFVMFAVPQVQFYLSPAMLILLALMTIDAIILGRKVGRLVDTKFPSNTESRWRLGLYAAGRASQIRRLRAPRPQVERGGDVG</sequence>
<evidence type="ECO:0000255" key="1"/>
<evidence type="ECO:0000256" key="2">
    <source>
        <dbReference type="SAM" id="MobiDB-lite"/>
    </source>
</evidence>
<evidence type="ECO:0000305" key="3"/>
<gene>
    <name type="ordered locus">BQ2027_MB2229</name>
</gene>
<accession>P64952</accession>
<accession>A0A1R3Y0X1</accession>
<accession>Q10395</accession>
<accession>X2BKF6</accession>
<reference key="1">
    <citation type="journal article" date="2003" name="Proc. Natl. Acad. Sci. U.S.A.">
        <title>The complete genome sequence of Mycobacterium bovis.</title>
        <authorList>
            <person name="Garnier T."/>
            <person name="Eiglmeier K."/>
            <person name="Camus J.-C."/>
            <person name="Medina N."/>
            <person name="Mansoor H."/>
            <person name="Pryor M."/>
            <person name="Duthoy S."/>
            <person name="Grondin S."/>
            <person name="Lacroix C."/>
            <person name="Monsempe C."/>
            <person name="Simon S."/>
            <person name="Harris B."/>
            <person name="Atkin R."/>
            <person name="Doggett J."/>
            <person name="Mayes R."/>
            <person name="Keating L."/>
            <person name="Wheeler P.R."/>
            <person name="Parkhill J."/>
            <person name="Barrell B.G."/>
            <person name="Cole S.T."/>
            <person name="Gordon S.V."/>
            <person name="Hewinson R.G."/>
        </authorList>
    </citation>
    <scope>NUCLEOTIDE SEQUENCE [LARGE SCALE GENOMIC DNA]</scope>
    <source>
        <strain>ATCC BAA-935 / AF2122/97</strain>
    </source>
</reference>
<reference key="2">
    <citation type="journal article" date="2017" name="Genome Announc.">
        <title>Updated reference genome sequence and annotation of Mycobacterium bovis AF2122/97.</title>
        <authorList>
            <person name="Malone K.M."/>
            <person name="Farrell D."/>
            <person name="Stuber T.P."/>
            <person name="Schubert O.T."/>
            <person name="Aebersold R."/>
            <person name="Robbe-Austerman S."/>
            <person name="Gordon S.V."/>
        </authorList>
    </citation>
    <scope>NUCLEOTIDE SEQUENCE [LARGE SCALE GENOMIC DNA]</scope>
    <scope>GENOME REANNOTATION</scope>
    <source>
        <strain>ATCC BAA-935 / AF2122/97</strain>
    </source>
</reference>
<name>Y2229_MYCBO</name>
<dbReference type="EMBL" id="LT708304">
    <property type="protein sequence ID" value="SIU00837.1"/>
    <property type="molecule type" value="Genomic_DNA"/>
</dbReference>
<dbReference type="RefSeq" id="NP_855878.1">
    <property type="nucleotide sequence ID" value="NC_002945.3"/>
</dbReference>
<dbReference type="RefSeq" id="WP_003411425.1">
    <property type="nucleotide sequence ID" value="NC_002945.4"/>
</dbReference>
<dbReference type="KEGG" id="mbo:BQ2027_MB2229"/>
<dbReference type="PATRIC" id="fig|233413.5.peg.2445"/>
<dbReference type="Proteomes" id="UP000001419">
    <property type="component" value="Chromosome"/>
</dbReference>
<dbReference type="GO" id="GO:0005886">
    <property type="term" value="C:plasma membrane"/>
    <property type="evidence" value="ECO:0007669"/>
    <property type="project" value="UniProtKB-SubCell"/>
</dbReference>
<dbReference type="InterPro" id="IPR021403">
    <property type="entry name" value="DUF3043"/>
</dbReference>
<dbReference type="Pfam" id="PF11241">
    <property type="entry name" value="DUF3043"/>
    <property type="match status" value="1"/>
</dbReference>
<organism>
    <name type="scientific">Mycobacterium bovis (strain ATCC BAA-935 / AF2122/97)</name>
    <dbReference type="NCBI Taxonomy" id="233413"/>
    <lineage>
        <taxon>Bacteria</taxon>
        <taxon>Bacillati</taxon>
        <taxon>Actinomycetota</taxon>
        <taxon>Actinomycetes</taxon>
        <taxon>Mycobacteriales</taxon>
        <taxon>Mycobacteriaceae</taxon>
        <taxon>Mycobacterium</taxon>
        <taxon>Mycobacterium tuberculosis complex</taxon>
    </lineage>
</organism>
<feature type="chain" id="PRO_0000103975" description="Uncharacterized protein Mb2229">
    <location>
        <begin position="1"/>
        <end position="236"/>
    </location>
</feature>
<feature type="transmembrane region" description="Helical" evidence="1">
    <location>
        <begin position="142"/>
        <end position="162"/>
    </location>
</feature>
<feature type="transmembrane region" description="Helical" evidence="1">
    <location>
        <begin position="166"/>
        <end position="186"/>
    </location>
</feature>
<feature type="region of interest" description="Disordered" evidence="2">
    <location>
        <begin position="1"/>
        <end position="108"/>
    </location>
</feature>
<feature type="compositionally biased region" description="Basic residues" evidence="2">
    <location>
        <begin position="1"/>
        <end position="12"/>
    </location>
</feature>
<feature type="compositionally biased region" description="Basic and acidic residues" evidence="2">
    <location>
        <begin position="13"/>
        <end position="31"/>
    </location>
</feature>
<feature type="compositionally biased region" description="Low complexity" evidence="2">
    <location>
        <begin position="32"/>
        <end position="47"/>
    </location>
</feature>
<feature type="compositionally biased region" description="Basic residues" evidence="2">
    <location>
        <begin position="52"/>
        <end position="65"/>
    </location>
</feature>
<feature type="compositionally biased region" description="Low complexity" evidence="2">
    <location>
        <begin position="67"/>
        <end position="78"/>
    </location>
</feature>
<feature type="compositionally biased region" description="Basic and acidic residues" evidence="2">
    <location>
        <begin position="90"/>
        <end position="108"/>
    </location>
</feature>
<protein>
    <recommendedName>
        <fullName>Uncharacterized protein Mb2229</fullName>
    </recommendedName>
</protein>
<keyword id="KW-1003">Cell membrane</keyword>
<keyword id="KW-0472">Membrane</keyword>
<keyword id="KW-1185">Reference proteome</keyword>
<keyword id="KW-0812">Transmembrane</keyword>
<keyword id="KW-1133">Transmembrane helix</keyword>
<proteinExistence type="predicted"/>
<comment type="subcellular location">
    <subcellularLocation>
        <location evidence="3">Cell membrane</location>
        <topology evidence="3">Multi-pass membrane protein</topology>
    </subcellularLocation>
</comment>